<dbReference type="EMBL" id="CP000766">
    <property type="protein sequence ID" value="ABY73206.1"/>
    <property type="molecule type" value="Genomic_DNA"/>
</dbReference>
<dbReference type="RefSeq" id="WP_012151373.1">
    <property type="nucleotide sequence ID" value="NC_010263.3"/>
</dbReference>
<dbReference type="SMR" id="B0BVE6"/>
<dbReference type="KEGG" id="rrj:RrIowa_1486"/>
<dbReference type="eggNOG" id="COG4974">
    <property type="taxonomic scope" value="Bacteria"/>
</dbReference>
<dbReference type="HOGENOM" id="CLU_027562_9_0_5"/>
<dbReference type="Proteomes" id="UP000000796">
    <property type="component" value="Chromosome"/>
</dbReference>
<dbReference type="GO" id="GO:0005737">
    <property type="term" value="C:cytoplasm"/>
    <property type="evidence" value="ECO:0007669"/>
    <property type="project" value="UniProtKB-SubCell"/>
</dbReference>
<dbReference type="GO" id="GO:0003677">
    <property type="term" value="F:DNA binding"/>
    <property type="evidence" value="ECO:0007669"/>
    <property type="project" value="UniProtKB-KW"/>
</dbReference>
<dbReference type="GO" id="GO:0009037">
    <property type="term" value="F:tyrosine-based site-specific recombinase activity"/>
    <property type="evidence" value="ECO:0007669"/>
    <property type="project" value="UniProtKB-UniRule"/>
</dbReference>
<dbReference type="GO" id="GO:0051301">
    <property type="term" value="P:cell division"/>
    <property type="evidence" value="ECO:0007669"/>
    <property type="project" value="UniProtKB-KW"/>
</dbReference>
<dbReference type="GO" id="GO:0007059">
    <property type="term" value="P:chromosome segregation"/>
    <property type="evidence" value="ECO:0007669"/>
    <property type="project" value="UniProtKB-UniRule"/>
</dbReference>
<dbReference type="GO" id="GO:0006313">
    <property type="term" value="P:DNA transposition"/>
    <property type="evidence" value="ECO:0007669"/>
    <property type="project" value="UniProtKB-UniRule"/>
</dbReference>
<dbReference type="Gene3D" id="1.10.150.130">
    <property type="match status" value="1"/>
</dbReference>
<dbReference type="Gene3D" id="1.10.443.10">
    <property type="entry name" value="Intergrase catalytic core"/>
    <property type="match status" value="1"/>
</dbReference>
<dbReference type="HAMAP" id="MF_01808">
    <property type="entry name" value="Recomb_XerC_XerD"/>
    <property type="match status" value="1"/>
</dbReference>
<dbReference type="InterPro" id="IPR044068">
    <property type="entry name" value="CB"/>
</dbReference>
<dbReference type="InterPro" id="IPR011010">
    <property type="entry name" value="DNA_brk_join_enz"/>
</dbReference>
<dbReference type="InterPro" id="IPR013762">
    <property type="entry name" value="Integrase-like_cat_sf"/>
</dbReference>
<dbReference type="InterPro" id="IPR002104">
    <property type="entry name" value="Integrase_catalytic"/>
</dbReference>
<dbReference type="InterPro" id="IPR010998">
    <property type="entry name" value="Integrase_recombinase_N"/>
</dbReference>
<dbReference type="InterPro" id="IPR004107">
    <property type="entry name" value="Integrase_SAM-like_N"/>
</dbReference>
<dbReference type="InterPro" id="IPR023009">
    <property type="entry name" value="Tyrosine_recombinase_XerC/XerD"/>
</dbReference>
<dbReference type="InterPro" id="IPR050090">
    <property type="entry name" value="Tyrosine_recombinase_XerCD"/>
</dbReference>
<dbReference type="PANTHER" id="PTHR30349">
    <property type="entry name" value="PHAGE INTEGRASE-RELATED"/>
    <property type="match status" value="1"/>
</dbReference>
<dbReference type="PANTHER" id="PTHR30349:SF90">
    <property type="entry name" value="TYROSINE RECOMBINASE XERD"/>
    <property type="match status" value="1"/>
</dbReference>
<dbReference type="Pfam" id="PF02899">
    <property type="entry name" value="Phage_int_SAM_1"/>
    <property type="match status" value="1"/>
</dbReference>
<dbReference type="Pfam" id="PF00589">
    <property type="entry name" value="Phage_integrase"/>
    <property type="match status" value="1"/>
</dbReference>
<dbReference type="SUPFAM" id="SSF56349">
    <property type="entry name" value="DNA breaking-rejoining enzymes"/>
    <property type="match status" value="1"/>
</dbReference>
<dbReference type="PROSITE" id="PS51900">
    <property type="entry name" value="CB"/>
    <property type="match status" value="1"/>
</dbReference>
<dbReference type="PROSITE" id="PS51898">
    <property type="entry name" value="TYR_RECOMBINASE"/>
    <property type="match status" value="1"/>
</dbReference>
<name>XERC_RICRO</name>
<accession>B0BVE6</accession>
<keyword id="KW-0131">Cell cycle</keyword>
<keyword id="KW-0132">Cell division</keyword>
<keyword id="KW-0159">Chromosome partition</keyword>
<keyword id="KW-0963">Cytoplasm</keyword>
<keyword id="KW-0229">DNA integration</keyword>
<keyword id="KW-0233">DNA recombination</keyword>
<keyword id="KW-0238">DNA-binding</keyword>
<gene>
    <name evidence="1" type="primary">xerC</name>
    <name type="ordered locus">RrIowa_1486</name>
</gene>
<organism>
    <name type="scientific">Rickettsia rickettsii (strain Iowa)</name>
    <dbReference type="NCBI Taxonomy" id="452659"/>
    <lineage>
        <taxon>Bacteria</taxon>
        <taxon>Pseudomonadati</taxon>
        <taxon>Pseudomonadota</taxon>
        <taxon>Alphaproteobacteria</taxon>
        <taxon>Rickettsiales</taxon>
        <taxon>Rickettsiaceae</taxon>
        <taxon>Rickettsieae</taxon>
        <taxon>Rickettsia</taxon>
        <taxon>spotted fever group</taxon>
    </lineage>
</organism>
<feature type="chain" id="PRO_1000088243" description="Tyrosine recombinase XerC">
    <location>
        <begin position="1"/>
        <end position="305"/>
    </location>
</feature>
<feature type="domain" description="Core-binding (CB)" evidence="3">
    <location>
        <begin position="4"/>
        <end position="95"/>
    </location>
</feature>
<feature type="domain" description="Tyr recombinase" evidence="2">
    <location>
        <begin position="116"/>
        <end position="298"/>
    </location>
</feature>
<feature type="active site" evidence="1">
    <location>
        <position position="159"/>
    </location>
</feature>
<feature type="active site" evidence="1">
    <location>
        <position position="182"/>
    </location>
</feature>
<feature type="active site" evidence="1">
    <location>
        <position position="250"/>
    </location>
</feature>
<feature type="active site" evidence="1">
    <location>
        <position position="253"/>
    </location>
</feature>
<feature type="active site" evidence="1">
    <location>
        <position position="276"/>
    </location>
</feature>
<feature type="active site" description="O-(3'-phospho-DNA)-tyrosine intermediate" evidence="1">
    <location>
        <position position="285"/>
    </location>
</feature>
<comment type="function">
    <text evidence="1">Site-specific tyrosine recombinase, which acts by catalyzing the cutting and rejoining of the recombining DNA molecules. The XerC-XerD complex is essential to convert dimers of the bacterial chromosome into monomers to permit their segregation at cell division. It also contributes to the segregational stability of plasmids.</text>
</comment>
<comment type="subunit">
    <text evidence="1">Forms a cyclic heterotetrameric complex composed of two molecules of XerC and two molecules of XerD.</text>
</comment>
<comment type="subcellular location">
    <subcellularLocation>
        <location evidence="1">Cytoplasm</location>
    </subcellularLocation>
</comment>
<comment type="similarity">
    <text evidence="1">Belongs to the 'phage' integrase family. XerC subfamily.</text>
</comment>
<sequence length="305" mass="35307">MLDTSIQALINKWQKYLVLQRNYSNHTVISYNNDLKHFLEFMNYYNSELVTINHIKTADIRLIRSWLAKRNCDNFAASSISRGLSAVKNFYRFLEKTTQLNSHIIFSIKSPKKTKLLPKALSEDDVVISLEHIEEYGNIKWVELRNKALLVLIYASGLRISEALSITKLHLQNLEFIRIIGKGSKERIIPWLPIAKNLITQYLEILPYKLGDNEPIFRGKQGKKLQPPVFNRELIKLKHFYGLPQHLTAHSFRHSFASHLLEHGADLRSLQALLGHKSLSTTQNYTKTSIKHLEAVYTTAYPIKK</sequence>
<protein>
    <recommendedName>
        <fullName evidence="1">Tyrosine recombinase XerC</fullName>
    </recommendedName>
</protein>
<evidence type="ECO:0000255" key="1">
    <source>
        <dbReference type="HAMAP-Rule" id="MF_01808"/>
    </source>
</evidence>
<evidence type="ECO:0000255" key="2">
    <source>
        <dbReference type="PROSITE-ProRule" id="PRU01246"/>
    </source>
</evidence>
<evidence type="ECO:0000255" key="3">
    <source>
        <dbReference type="PROSITE-ProRule" id="PRU01248"/>
    </source>
</evidence>
<proteinExistence type="inferred from homology"/>
<reference key="1">
    <citation type="journal article" date="2008" name="Infect. Immun.">
        <title>Genomic comparison of virulent Rickettsia rickettsii Sheila Smith and avirulent Rickettsia rickettsii Iowa.</title>
        <authorList>
            <person name="Ellison D.W."/>
            <person name="Clark T.R."/>
            <person name="Sturdevant D.E."/>
            <person name="Virtaneva K."/>
            <person name="Porcella S.F."/>
            <person name="Hackstadt T."/>
        </authorList>
    </citation>
    <scope>NUCLEOTIDE SEQUENCE [LARGE SCALE GENOMIC DNA]</scope>
    <source>
        <strain>Iowa</strain>
    </source>
</reference>